<reference key="1">
    <citation type="journal article" date="2004" name="Nucleic Acids Res.">
        <title>Genome sequence of Symbiobacterium thermophilum, an uncultivable bacterium that depends on microbial commensalism.</title>
        <authorList>
            <person name="Ueda K."/>
            <person name="Yamashita A."/>
            <person name="Ishikawa J."/>
            <person name="Shimada M."/>
            <person name="Watsuji T."/>
            <person name="Morimura K."/>
            <person name="Ikeda H."/>
            <person name="Hattori M."/>
            <person name="Beppu T."/>
        </authorList>
    </citation>
    <scope>NUCLEOTIDE SEQUENCE [LARGE SCALE GENOMIC DNA]</scope>
    <source>
        <strain>DSM 24528 / JCM 14929 / IAM 14863 / T</strain>
    </source>
</reference>
<comment type="function">
    <text evidence="1">Catalyzes the attachment of serine to tRNA(Ser). Is also able to aminoacylate tRNA(Sec) with serine, to form the misacylated tRNA L-seryl-tRNA(Sec), which will be further converted into selenocysteinyl-tRNA(Sec).</text>
</comment>
<comment type="catalytic activity">
    <reaction evidence="1">
        <text>tRNA(Ser) + L-serine + ATP = L-seryl-tRNA(Ser) + AMP + diphosphate + H(+)</text>
        <dbReference type="Rhea" id="RHEA:12292"/>
        <dbReference type="Rhea" id="RHEA-COMP:9669"/>
        <dbReference type="Rhea" id="RHEA-COMP:9703"/>
        <dbReference type="ChEBI" id="CHEBI:15378"/>
        <dbReference type="ChEBI" id="CHEBI:30616"/>
        <dbReference type="ChEBI" id="CHEBI:33019"/>
        <dbReference type="ChEBI" id="CHEBI:33384"/>
        <dbReference type="ChEBI" id="CHEBI:78442"/>
        <dbReference type="ChEBI" id="CHEBI:78533"/>
        <dbReference type="ChEBI" id="CHEBI:456215"/>
        <dbReference type="EC" id="6.1.1.11"/>
    </reaction>
</comment>
<comment type="catalytic activity">
    <reaction evidence="1">
        <text>tRNA(Sec) + L-serine + ATP = L-seryl-tRNA(Sec) + AMP + diphosphate + H(+)</text>
        <dbReference type="Rhea" id="RHEA:42580"/>
        <dbReference type="Rhea" id="RHEA-COMP:9742"/>
        <dbReference type="Rhea" id="RHEA-COMP:10128"/>
        <dbReference type="ChEBI" id="CHEBI:15378"/>
        <dbReference type="ChEBI" id="CHEBI:30616"/>
        <dbReference type="ChEBI" id="CHEBI:33019"/>
        <dbReference type="ChEBI" id="CHEBI:33384"/>
        <dbReference type="ChEBI" id="CHEBI:78442"/>
        <dbReference type="ChEBI" id="CHEBI:78533"/>
        <dbReference type="ChEBI" id="CHEBI:456215"/>
        <dbReference type="EC" id="6.1.1.11"/>
    </reaction>
</comment>
<comment type="pathway">
    <text evidence="1">Aminoacyl-tRNA biosynthesis; selenocysteinyl-tRNA(Sec) biosynthesis; L-seryl-tRNA(Sec) from L-serine and tRNA(Sec): step 1/1.</text>
</comment>
<comment type="subunit">
    <text evidence="1">Homodimer. The tRNA molecule binds across the dimer.</text>
</comment>
<comment type="subcellular location">
    <subcellularLocation>
        <location evidence="1">Cytoplasm</location>
    </subcellularLocation>
</comment>
<comment type="domain">
    <text evidence="1">Consists of two distinct domains, a catalytic core and a N-terminal extension that is involved in tRNA binding.</text>
</comment>
<comment type="similarity">
    <text evidence="1">Belongs to the class-II aminoacyl-tRNA synthetase family. Type-1 seryl-tRNA synthetase subfamily.</text>
</comment>
<evidence type="ECO:0000255" key="1">
    <source>
        <dbReference type="HAMAP-Rule" id="MF_00176"/>
    </source>
</evidence>
<sequence length="421" mass="47767">MLDLRFVRTNPDVVRQALINKGVSVDLDRILALDVERRQILAEVEQLKARRNQVSKQVGILKQQGQDVSAIIAEMGAIGDRIKELDDRERQVSDELQDLLYQLPNLPAPDVPVGPDETGNVEVKRWGEPRQFAFPVKPHWDLGVAMDGLDFERAAKVTGSRFSFIKGGLARLHRALVSFFIDYLTERGYREVLPPVIINTASYYGSGQFPKFKEDVFSLAGTDYHLASTAEVPLVNMHRDEILDEAVLPLRYVGYSGCFRSEAGAAGRDTRGLIRQHYFEKVEMVQFTRPEESEQALMEIVANAEGMLEQLNLPYRRMLMCTGDMGFGQYKKYDIEVWMPSYERYVEISSCSNMSDFQARRANIRYRPAGGKPEFVHTLNGSGLAVGRTLAAVMENYQNEDGSITVPEVLRPYTRCERIER</sequence>
<keyword id="KW-0030">Aminoacyl-tRNA synthetase</keyword>
<keyword id="KW-0067">ATP-binding</keyword>
<keyword id="KW-0963">Cytoplasm</keyword>
<keyword id="KW-0436">Ligase</keyword>
<keyword id="KW-0547">Nucleotide-binding</keyword>
<keyword id="KW-0648">Protein biosynthesis</keyword>
<keyword id="KW-1185">Reference proteome</keyword>
<feature type="chain" id="PRO_0000122139" description="Serine--tRNA ligase">
    <location>
        <begin position="1"/>
        <end position="421"/>
    </location>
</feature>
<feature type="binding site" evidence="1">
    <location>
        <begin position="229"/>
        <end position="231"/>
    </location>
    <ligand>
        <name>L-serine</name>
        <dbReference type="ChEBI" id="CHEBI:33384"/>
    </ligand>
</feature>
<feature type="binding site" evidence="1">
    <location>
        <begin position="260"/>
        <end position="262"/>
    </location>
    <ligand>
        <name>ATP</name>
        <dbReference type="ChEBI" id="CHEBI:30616"/>
    </ligand>
</feature>
<feature type="binding site" evidence="1">
    <location>
        <position position="283"/>
    </location>
    <ligand>
        <name>L-serine</name>
        <dbReference type="ChEBI" id="CHEBI:33384"/>
    </ligand>
</feature>
<feature type="binding site" evidence="1">
    <location>
        <begin position="347"/>
        <end position="350"/>
    </location>
    <ligand>
        <name>ATP</name>
        <dbReference type="ChEBI" id="CHEBI:30616"/>
    </ligand>
</feature>
<feature type="binding site" evidence="1">
    <location>
        <position position="382"/>
    </location>
    <ligand>
        <name>L-serine</name>
        <dbReference type="ChEBI" id="CHEBI:33384"/>
    </ligand>
</feature>
<protein>
    <recommendedName>
        <fullName evidence="1">Serine--tRNA ligase</fullName>
        <ecNumber evidence="1">6.1.1.11</ecNumber>
    </recommendedName>
    <alternativeName>
        <fullName evidence="1">Seryl-tRNA synthetase</fullName>
        <shortName evidence="1">SerRS</shortName>
    </alternativeName>
    <alternativeName>
        <fullName evidence="1">Seryl-tRNA(Ser/Sec) synthetase</fullName>
    </alternativeName>
</protein>
<dbReference type="EC" id="6.1.1.11" evidence="1"/>
<dbReference type="EMBL" id="AP006840">
    <property type="protein sequence ID" value="BAD38995.1"/>
    <property type="molecule type" value="Genomic_DNA"/>
</dbReference>
<dbReference type="RefSeq" id="WP_011194145.1">
    <property type="nucleotide sequence ID" value="NC_006177.1"/>
</dbReference>
<dbReference type="SMR" id="Q67TJ8"/>
<dbReference type="STRING" id="292459.STH10"/>
<dbReference type="KEGG" id="sth:STH10"/>
<dbReference type="eggNOG" id="COG0172">
    <property type="taxonomic scope" value="Bacteria"/>
</dbReference>
<dbReference type="HOGENOM" id="CLU_023797_1_1_9"/>
<dbReference type="OrthoDB" id="9804647at2"/>
<dbReference type="UniPathway" id="UPA00906">
    <property type="reaction ID" value="UER00895"/>
</dbReference>
<dbReference type="Proteomes" id="UP000000417">
    <property type="component" value="Chromosome"/>
</dbReference>
<dbReference type="GO" id="GO:0005737">
    <property type="term" value="C:cytoplasm"/>
    <property type="evidence" value="ECO:0007669"/>
    <property type="project" value="UniProtKB-SubCell"/>
</dbReference>
<dbReference type="GO" id="GO:0005524">
    <property type="term" value="F:ATP binding"/>
    <property type="evidence" value="ECO:0007669"/>
    <property type="project" value="UniProtKB-UniRule"/>
</dbReference>
<dbReference type="GO" id="GO:0140096">
    <property type="term" value="F:catalytic activity, acting on a protein"/>
    <property type="evidence" value="ECO:0007669"/>
    <property type="project" value="UniProtKB-ARBA"/>
</dbReference>
<dbReference type="GO" id="GO:0004828">
    <property type="term" value="F:serine-tRNA ligase activity"/>
    <property type="evidence" value="ECO:0007669"/>
    <property type="project" value="UniProtKB-UniRule"/>
</dbReference>
<dbReference type="GO" id="GO:0016740">
    <property type="term" value="F:transferase activity"/>
    <property type="evidence" value="ECO:0007669"/>
    <property type="project" value="UniProtKB-ARBA"/>
</dbReference>
<dbReference type="GO" id="GO:0016260">
    <property type="term" value="P:selenocysteine biosynthetic process"/>
    <property type="evidence" value="ECO:0007669"/>
    <property type="project" value="UniProtKB-UniRule"/>
</dbReference>
<dbReference type="GO" id="GO:0006434">
    <property type="term" value="P:seryl-tRNA aminoacylation"/>
    <property type="evidence" value="ECO:0007669"/>
    <property type="project" value="UniProtKB-UniRule"/>
</dbReference>
<dbReference type="CDD" id="cd00770">
    <property type="entry name" value="SerRS_core"/>
    <property type="match status" value="1"/>
</dbReference>
<dbReference type="Gene3D" id="3.30.930.10">
    <property type="entry name" value="Bira Bifunctional Protein, Domain 2"/>
    <property type="match status" value="1"/>
</dbReference>
<dbReference type="Gene3D" id="1.10.287.40">
    <property type="entry name" value="Serine-tRNA synthetase, tRNA binding domain"/>
    <property type="match status" value="1"/>
</dbReference>
<dbReference type="HAMAP" id="MF_00176">
    <property type="entry name" value="Ser_tRNA_synth_type1"/>
    <property type="match status" value="1"/>
</dbReference>
<dbReference type="InterPro" id="IPR002314">
    <property type="entry name" value="aa-tRNA-synt_IIb"/>
</dbReference>
<dbReference type="InterPro" id="IPR006195">
    <property type="entry name" value="aa-tRNA-synth_II"/>
</dbReference>
<dbReference type="InterPro" id="IPR045864">
    <property type="entry name" value="aa-tRNA-synth_II/BPL/LPL"/>
</dbReference>
<dbReference type="InterPro" id="IPR002317">
    <property type="entry name" value="Ser-tRNA-ligase_type_1"/>
</dbReference>
<dbReference type="InterPro" id="IPR015866">
    <property type="entry name" value="Ser-tRNA-synth_1_N"/>
</dbReference>
<dbReference type="InterPro" id="IPR042103">
    <property type="entry name" value="SerRS_1_N_sf"/>
</dbReference>
<dbReference type="InterPro" id="IPR033729">
    <property type="entry name" value="SerRS_core"/>
</dbReference>
<dbReference type="InterPro" id="IPR010978">
    <property type="entry name" value="tRNA-bd_arm"/>
</dbReference>
<dbReference type="NCBIfam" id="TIGR00414">
    <property type="entry name" value="serS"/>
    <property type="match status" value="1"/>
</dbReference>
<dbReference type="PANTHER" id="PTHR43697:SF1">
    <property type="entry name" value="SERINE--TRNA LIGASE"/>
    <property type="match status" value="1"/>
</dbReference>
<dbReference type="PANTHER" id="PTHR43697">
    <property type="entry name" value="SERYL-TRNA SYNTHETASE"/>
    <property type="match status" value="1"/>
</dbReference>
<dbReference type="Pfam" id="PF02403">
    <property type="entry name" value="Seryl_tRNA_N"/>
    <property type="match status" value="1"/>
</dbReference>
<dbReference type="Pfam" id="PF00587">
    <property type="entry name" value="tRNA-synt_2b"/>
    <property type="match status" value="1"/>
</dbReference>
<dbReference type="PIRSF" id="PIRSF001529">
    <property type="entry name" value="Ser-tRNA-synth_IIa"/>
    <property type="match status" value="1"/>
</dbReference>
<dbReference type="PRINTS" id="PR00981">
    <property type="entry name" value="TRNASYNTHSER"/>
</dbReference>
<dbReference type="SUPFAM" id="SSF55681">
    <property type="entry name" value="Class II aaRS and biotin synthetases"/>
    <property type="match status" value="1"/>
</dbReference>
<dbReference type="SUPFAM" id="SSF46589">
    <property type="entry name" value="tRNA-binding arm"/>
    <property type="match status" value="1"/>
</dbReference>
<dbReference type="PROSITE" id="PS50862">
    <property type="entry name" value="AA_TRNA_LIGASE_II"/>
    <property type="match status" value="1"/>
</dbReference>
<gene>
    <name evidence="1" type="primary">serS</name>
    <name type="ordered locus">STH10</name>
</gene>
<organism>
    <name type="scientific">Symbiobacterium thermophilum (strain DSM 24528 / JCM 14929 / IAM 14863 / T)</name>
    <dbReference type="NCBI Taxonomy" id="292459"/>
    <lineage>
        <taxon>Bacteria</taxon>
        <taxon>Bacillati</taxon>
        <taxon>Bacillota</taxon>
        <taxon>Clostridia</taxon>
        <taxon>Eubacteriales</taxon>
        <taxon>Symbiobacteriaceae</taxon>
        <taxon>Symbiobacterium</taxon>
    </lineage>
</organism>
<name>SYS_SYMTH</name>
<accession>Q67TJ8</accession>
<proteinExistence type="inferred from homology"/>